<name>AROE_XANOM</name>
<keyword id="KW-0028">Amino-acid biosynthesis</keyword>
<keyword id="KW-0057">Aromatic amino acid biosynthesis</keyword>
<keyword id="KW-0521">NADP</keyword>
<keyword id="KW-0560">Oxidoreductase</keyword>
<sequence>MPVSRYAVFGHPVAHSLSPAIHADFGKQTGIVLDYTAIDAPPEDFSAALQRFADGGGKGANVTLPLKEAACALASSLSDRARLAGAVNTLVRHEGQWQGENTDGIGLVRDLTDRHGLDLRGRRVLLLGAGGAARGVAPALLQAGITEMVVVNRSPERADALCDTLGEPGRVVSRYIEDLRDLGDFELIVNATAAGRDRDAGAFAMPLGLVNSLTAAVDLNYGATAIAFLAWARSAQCRYAIDGLGMLVEQAAESFALWHGVRPDTDPVYAALRAREAVLVSAD</sequence>
<gene>
    <name evidence="1" type="primary">aroE</name>
    <name type="ordered locus">XOO0372</name>
</gene>
<proteinExistence type="inferred from homology"/>
<evidence type="ECO:0000255" key="1">
    <source>
        <dbReference type="HAMAP-Rule" id="MF_00222"/>
    </source>
</evidence>
<dbReference type="EC" id="1.1.1.25" evidence="1"/>
<dbReference type="EMBL" id="AP008229">
    <property type="protein sequence ID" value="BAE67127.1"/>
    <property type="molecule type" value="Genomic_DNA"/>
</dbReference>
<dbReference type="RefSeq" id="WP_011257342.1">
    <property type="nucleotide sequence ID" value="NC_007705.1"/>
</dbReference>
<dbReference type="SMR" id="Q2P8K0"/>
<dbReference type="KEGG" id="xom:XOO0372"/>
<dbReference type="HOGENOM" id="CLU_044063_2_1_6"/>
<dbReference type="UniPathway" id="UPA00053">
    <property type="reaction ID" value="UER00087"/>
</dbReference>
<dbReference type="GO" id="GO:0005829">
    <property type="term" value="C:cytosol"/>
    <property type="evidence" value="ECO:0007669"/>
    <property type="project" value="TreeGrafter"/>
</dbReference>
<dbReference type="GO" id="GO:0050661">
    <property type="term" value="F:NADP binding"/>
    <property type="evidence" value="ECO:0007669"/>
    <property type="project" value="InterPro"/>
</dbReference>
<dbReference type="GO" id="GO:0004764">
    <property type="term" value="F:shikimate 3-dehydrogenase (NADP+) activity"/>
    <property type="evidence" value="ECO:0007669"/>
    <property type="project" value="UniProtKB-UniRule"/>
</dbReference>
<dbReference type="GO" id="GO:0008652">
    <property type="term" value="P:amino acid biosynthetic process"/>
    <property type="evidence" value="ECO:0007669"/>
    <property type="project" value="UniProtKB-KW"/>
</dbReference>
<dbReference type="GO" id="GO:0009073">
    <property type="term" value="P:aromatic amino acid family biosynthetic process"/>
    <property type="evidence" value="ECO:0007669"/>
    <property type="project" value="UniProtKB-KW"/>
</dbReference>
<dbReference type="GO" id="GO:0009423">
    <property type="term" value="P:chorismate biosynthetic process"/>
    <property type="evidence" value="ECO:0007669"/>
    <property type="project" value="UniProtKB-UniRule"/>
</dbReference>
<dbReference type="GO" id="GO:0019632">
    <property type="term" value="P:shikimate metabolic process"/>
    <property type="evidence" value="ECO:0007669"/>
    <property type="project" value="InterPro"/>
</dbReference>
<dbReference type="CDD" id="cd01065">
    <property type="entry name" value="NAD_bind_Shikimate_DH"/>
    <property type="match status" value="1"/>
</dbReference>
<dbReference type="FunFam" id="3.40.50.10860:FF:000006">
    <property type="entry name" value="Shikimate dehydrogenase (NADP(+))"/>
    <property type="match status" value="1"/>
</dbReference>
<dbReference type="Gene3D" id="3.40.50.10860">
    <property type="entry name" value="Leucine Dehydrogenase, chain A, domain 1"/>
    <property type="match status" value="1"/>
</dbReference>
<dbReference type="Gene3D" id="3.40.50.720">
    <property type="entry name" value="NAD(P)-binding Rossmann-like Domain"/>
    <property type="match status" value="1"/>
</dbReference>
<dbReference type="HAMAP" id="MF_00222">
    <property type="entry name" value="Shikimate_DH_AroE"/>
    <property type="match status" value="1"/>
</dbReference>
<dbReference type="InterPro" id="IPR046346">
    <property type="entry name" value="Aminoacid_DH-like_N_sf"/>
</dbReference>
<dbReference type="InterPro" id="IPR036291">
    <property type="entry name" value="NAD(P)-bd_dom_sf"/>
</dbReference>
<dbReference type="InterPro" id="IPR041121">
    <property type="entry name" value="SDH_C"/>
</dbReference>
<dbReference type="InterPro" id="IPR011342">
    <property type="entry name" value="Shikimate_DH"/>
</dbReference>
<dbReference type="InterPro" id="IPR013708">
    <property type="entry name" value="Shikimate_DH-bd_N"/>
</dbReference>
<dbReference type="InterPro" id="IPR022893">
    <property type="entry name" value="Shikimate_DH_fam"/>
</dbReference>
<dbReference type="InterPro" id="IPR006151">
    <property type="entry name" value="Shikm_DH/Glu-tRNA_Rdtase"/>
</dbReference>
<dbReference type="NCBIfam" id="TIGR00507">
    <property type="entry name" value="aroE"/>
    <property type="match status" value="1"/>
</dbReference>
<dbReference type="NCBIfam" id="NF001310">
    <property type="entry name" value="PRK00258.1-2"/>
    <property type="match status" value="1"/>
</dbReference>
<dbReference type="PANTHER" id="PTHR21089:SF1">
    <property type="entry name" value="BIFUNCTIONAL 3-DEHYDROQUINATE DEHYDRATASE_SHIKIMATE DEHYDROGENASE, CHLOROPLASTIC"/>
    <property type="match status" value="1"/>
</dbReference>
<dbReference type="PANTHER" id="PTHR21089">
    <property type="entry name" value="SHIKIMATE DEHYDROGENASE"/>
    <property type="match status" value="1"/>
</dbReference>
<dbReference type="Pfam" id="PF18317">
    <property type="entry name" value="SDH_C"/>
    <property type="match status" value="1"/>
</dbReference>
<dbReference type="Pfam" id="PF01488">
    <property type="entry name" value="Shikimate_DH"/>
    <property type="match status" value="1"/>
</dbReference>
<dbReference type="Pfam" id="PF08501">
    <property type="entry name" value="Shikimate_dh_N"/>
    <property type="match status" value="1"/>
</dbReference>
<dbReference type="SUPFAM" id="SSF53223">
    <property type="entry name" value="Aminoacid dehydrogenase-like, N-terminal domain"/>
    <property type="match status" value="1"/>
</dbReference>
<dbReference type="SUPFAM" id="SSF51735">
    <property type="entry name" value="NAD(P)-binding Rossmann-fold domains"/>
    <property type="match status" value="1"/>
</dbReference>
<accession>Q2P8K0</accession>
<feature type="chain" id="PRO_1000021363" description="Shikimate dehydrogenase (NADP(+))">
    <location>
        <begin position="1"/>
        <end position="283"/>
    </location>
</feature>
<feature type="active site" description="Proton acceptor" evidence="1">
    <location>
        <position position="67"/>
    </location>
</feature>
<feature type="binding site" evidence="1">
    <location>
        <begin position="16"/>
        <end position="18"/>
    </location>
    <ligand>
        <name>shikimate</name>
        <dbReference type="ChEBI" id="CHEBI:36208"/>
    </ligand>
</feature>
<feature type="binding site" evidence="1">
    <location>
        <position position="63"/>
    </location>
    <ligand>
        <name>shikimate</name>
        <dbReference type="ChEBI" id="CHEBI:36208"/>
    </ligand>
</feature>
<feature type="binding site" evidence="1">
    <location>
        <position position="79"/>
    </location>
    <ligand>
        <name>NADP(+)</name>
        <dbReference type="ChEBI" id="CHEBI:58349"/>
    </ligand>
</feature>
<feature type="binding site" evidence="1">
    <location>
        <position position="88"/>
    </location>
    <ligand>
        <name>shikimate</name>
        <dbReference type="ChEBI" id="CHEBI:36208"/>
    </ligand>
</feature>
<feature type="binding site" evidence="1">
    <location>
        <position position="103"/>
    </location>
    <ligand>
        <name>shikimate</name>
        <dbReference type="ChEBI" id="CHEBI:36208"/>
    </ligand>
</feature>
<feature type="binding site" evidence="1">
    <location>
        <begin position="128"/>
        <end position="132"/>
    </location>
    <ligand>
        <name>NADP(+)</name>
        <dbReference type="ChEBI" id="CHEBI:58349"/>
    </ligand>
</feature>
<feature type="binding site" evidence="1">
    <location>
        <position position="223"/>
    </location>
    <ligand>
        <name>NADP(+)</name>
        <dbReference type="ChEBI" id="CHEBI:58349"/>
    </ligand>
</feature>
<feature type="binding site" evidence="1">
    <location>
        <position position="243"/>
    </location>
    <ligand>
        <name>NADP(+)</name>
        <dbReference type="ChEBI" id="CHEBI:58349"/>
    </ligand>
</feature>
<reference key="1">
    <citation type="journal article" date="2005" name="Jpn. Agric. Res. Q.">
        <title>Genome sequence of Xanthomonas oryzae pv. oryzae suggests contribution of large numbers of effector genes and insertion sequences to its race diversity.</title>
        <authorList>
            <person name="Ochiai H."/>
            <person name="Inoue Y."/>
            <person name="Takeya M."/>
            <person name="Sasaki A."/>
            <person name="Kaku H."/>
        </authorList>
    </citation>
    <scope>NUCLEOTIDE SEQUENCE [LARGE SCALE GENOMIC DNA]</scope>
    <source>
        <strain>MAFF 311018</strain>
    </source>
</reference>
<organism>
    <name type="scientific">Xanthomonas oryzae pv. oryzae (strain MAFF 311018)</name>
    <dbReference type="NCBI Taxonomy" id="342109"/>
    <lineage>
        <taxon>Bacteria</taxon>
        <taxon>Pseudomonadati</taxon>
        <taxon>Pseudomonadota</taxon>
        <taxon>Gammaproteobacteria</taxon>
        <taxon>Lysobacterales</taxon>
        <taxon>Lysobacteraceae</taxon>
        <taxon>Xanthomonas</taxon>
    </lineage>
</organism>
<comment type="function">
    <text evidence="1">Involved in the biosynthesis of the chorismate, which leads to the biosynthesis of aromatic amino acids. Catalyzes the reversible NADPH linked reduction of 3-dehydroshikimate (DHSA) to yield shikimate (SA).</text>
</comment>
<comment type="catalytic activity">
    <reaction evidence="1">
        <text>shikimate + NADP(+) = 3-dehydroshikimate + NADPH + H(+)</text>
        <dbReference type="Rhea" id="RHEA:17737"/>
        <dbReference type="ChEBI" id="CHEBI:15378"/>
        <dbReference type="ChEBI" id="CHEBI:16630"/>
        <dbReference type="ChEBI" id="CHEBI:36208"/>
        <dbReference type="ChEBI" id="CHEBI:57783"/>
        <dbReference type="ChEBI" id="CHEBI:58349"/>
        <dbReference type="EC" id="1.1.1.25"/>
    </reaction>
</comment>
<comment type="pathway">
    <text evidence="1">Metabolic intermediate biosynthesis; chorismate biosynthesis; chorismate from D-erythrose 4-phosphate and phosphoenolpyruvate: step 4/7.</text>
</comment>
<comment type="subunit">
    <text evidence="1">Homodimer.</text>
</comment>
<comment type="similarity">
    <text evidence="1">Belongs to the shikimate dehydrogenase family.</text>
</comment>
<protein>
    <recommendedName>
        <fullName evidence="1">Shikimate dehydrogenase (NADP(+))</fullName>
        <shortName evidence="1">SDH</shortName>
        <ecNumber evidence="1">1.1.1.25</ecNumber>
    </recommendedName>
</protein>